<proteinExistence type="inferred from homology"/>
<feature type="chain" id="PRO_0000052395" description="K(+)/H(+) antiporter NhaP2">
    <location>
        <begin position="1"/>
        <end position="580"/>
    </location>
</feature>
<feature type="transmembrane region" description="Helical" evidence="1">
    <location>
        <begin position="6"/>
        <end position="26"/>
    </location>
</feature>
<feature type="transmembrane region" description="Helical" evidence="1">
    <location>
        <begin position="34"/>
        <end position="54"/>
    </location>
</feature>
<feature type="transmembrane region" description="Helical" evidence="1">
    <location>
        <begin position="57"/>
        <end position="77"/>
    </location>
</feature>
<feature type="transmembrane region" description="Helical" evidence="1">
    <location>
        <begin position="86"/>
        <end position="106"/>
    </location>
</feature>
<feature type="transmembrane region" description="Helical" evidence="1">
    <location>
        <begin position="108"/>
        <end position="128"/>
    </location>
</feature>
<feature type="transmembrane region" description="Helical" evidence="1">
    <location>
        <begin position="162"/>
        <end position="182"/>
    </location>
</feature>
<feature type="transmembrane region" description="Helical" evidence="1">
    <location>
        <begin position="189"/>
        <end position="209"/>
    </location>
</feature>
<feature type="transmembrane region" description="Helical" evidence="1">
    <location>
        <begin position="217"/>
        <end position="237"/>
    </location>
</feature>
<feature type="transmembrane region" description="Helical" evidence="1">
    <location>
        <begin position="240"/>
        <end position="260"/>
    </location>
</feature>
<feature type="transmembrane region" description="Helical" evidence="1">
    <location>
        <begin position="279"/>
        <end position="299"/>
    </location>
</feature>
<feature type="transmembrane region" description="Helical" evidence="1">
    <location>
        <begin position="302"/>
        <end position="322"/>
    </location>
</feature>
<feature type="transmembrane region" description="Helical" evidence="1">
    <location>
        <begin position="334"/>
        <end position="354"/>
    </location>
</feature>
<feature type="transmembrane region" description="Helical" evidence="1">
    <location>
        <begin position="366"/>
        <end position="386"/>
    </location>
</feature>
<feature type="domain" description="RCK C-terminal" evidence="1">
    <location>
        <begin position="402"/>
        <end position="484"/>
    </location>
</feature>
<accession>Q87VB6</accession>
<reference key="1">
    <citation type="journal article" date="2003" name="Proc. Natl. Acad. Sci. U.S.A.">
        <title>The complete genome sequence of the Arabidopsis and tomato pathogen Pseudomonas syringae pv. tomato DC3000.</title>
        <authorList>
            <person name="Buell C.R."/>
            <person name="Joardar V."/>
            <person name="Lindeberg M."/>
            <person name="Selengut J."/>
            <person name="Paulsen I.T."/>
            <person name="Gwinn M.L."/>
            <person name="Dodson R.J."/>
            <person name="DeBoy R.T."/>
            <person name="Durkin A.S."/>
            <person name="Kolonay J.F."/>
            <person name="Madupu R."/>
            <person name="Daugherty S.C."/>
            <person name="Brinkac L.M."/>
            <person name="Beanan M.J."/>
            <person name="Haft D.H."/>
            <person name="Nelson W.C."/>
            <person name="Davidsen T.M."/>
            <person name="Zafar N."/>
            <person name="Zhou L."/>
            <person name="Liu J."/>
            <person name="Yuan Q."/>
            <person name="Khouri H.M."/>
            <person name="Fedorova N.B."/>
            <person name="Tran B."/>
            <person name="Russell D."/>
            <person name="Berry K.J."/>
            <person name="Utterback T.R."/>
            <person name="Van Aken S.E."/>
            <person name="Feldblyum T.V."/>
            <person name="D'Ascenzo M."/>
            <person name="Deng W.-L."/>
            <person name="Ramos A.R."/>
            <person name="Alfano J.R."/>
            <person name="Cartinhour S."/>
            <person name="Chatterjee A.K."/>
            <person name="Delaney T.P."/>
            <person name="Lazarowitz S.G."/>
            <person name="Martin G.B."/>
            <person name="Schneider D.J."/>
            <person name="Tang X."/>
            <person name="Bender C.L."/>
            <person name="White O."/>
            <person name="Fraser C.M."/>
            <person name="Collmer A."/>
        </authorList>
    </citation>
    <scope>NUCLEOTIDE SEQUENCE [LARGE SCALE GENOMIC DNA]</scope>
    <source>
        <strain>ATCC BAA-871 / DC3000</strain>
    </source>
</reference>
<organism>
    <name type="scientific">Pseudomonas syringae pv. tomato (strain ATCC BAA-871 / DC3000)</name>
    <dbReference type="NCBI Taxonomy" id="223283"/>
    <lineage>
        <taxon>Bacteria</taxon>
        <taxon>Pseudomonadati</taxon>
        <taxon>Pseudomonadota</taxon>
        <taxon>Gammaproteobacteria</taxon>
        <taxon>Pseudomonadales</taxon>
        <taxon>Pseudomonadaceae</taxon>
        <taxon>Pseudomonas</taxon>
    </lineage>
</organism>
<evidence type="ECO:0000255" key="1">
    <source>
        <dbReference type="HAMAP-Rule" id="MF_01075"/>
    </source>
</evidence>
<evidence type="ECO:0000305" key="2"/>
<dbReference type="EMBL" id="AE016853">
    <property type="protein sequence ID" value="AAO58451.1"/>
    <property type="status" value="ALT_INIT"/>
    <property type="molecule type" value="Genomic_DNA"/>
</dbReference>
<dbReference type="RefSeq" id="NP_794756.3">
    <property type="nucleotide sequence ID" value="NC_004578.1"/>
</dbReference>
<dbReference type="RefSeq" id="WP_005771787.1">
    <property type="nucleotide sequence ID" value="NC_004578.1"/>
</dbReference>
<dbReference type="SMR" id="Q87VB6"/>
<dbReference type="STRING" id="223283.PSPTO_5023"/>
<dbReference type="KEGG" id="pst:PSPTO_5023"/>
<dbReference type="PATRIC" id="fig|223283.9.peg.5143"/>
<dbReference type="eggNOG" id="COG3263">
    <property type="taxonomic scope" value="Bacteria"/>
</dbReference>
<dbReference type="HOGENOM" id="CLU_005912_9_2_6"/>
<dbReference type="OrthoDB" id="9810759at2"/>
<dbReference type="Proteomes" id="UP000002515">
    <property type="component" value="Chromosome"/>
</dbReference>
<dbReference type="GO" id="GO:0005886">
    <property type="term" value="C:plasma membrane"/>
    <property type="evidence" value="ECO:0007669"/>
    <property type="project" value="UniProtKB-SubCell"/>
</dbReference>
<dbReference type="GO" id="GO:0050660">
    <property type="term" value="F:flavin adenine dinucleotide binding"/>
    <property type="evidence" value="ECO:0007669"/>
    <property type="project" value="InterPro"/>
</dbReference>
<dbReference type="GO" id="GO:0015386">
    <property type="term" value="F:potassium:proton antiporter activity"/>
    <property type="evidence" value="ECO:0007669"/>
    <property type="project" value="UniProtKB-UniRule"/>
</dbReference>
<dbReference type="GO" id="GO:0006884">
    <property type="term" value="P:cell volume homeostasis"/>
    <property type="evidence" value="ECO:0007669"/>
    <property type="project" value="InterPro"/>
</dbReference>
<dbReference type="Gene3D" id="1.20.1530.20">
    <property type="match status" value="1"/>
</dbReference>
<dbReference type="Gene3D" id="3.30.465.10">
    <property type="match status" value="1"/>
</dbReference>
<dbReference type="Gene3D" id="3.30.70.1450">
    <property type="entry name" value="Regulator of K+ conductance, C-terminal domain"/>
    <property type="match status" value="1"/>
</dbReference>
<dbReference type="HAMAP" id="MF_01075">
    <property type="entry name" value="NhaP2"/>
    <property type="match status" value="1"/>
</dbReference>
<dbReference type="InterPro" id="IPR006153">
    <property type="entry name" value="Cation/H_exchanger_TM"/>
</dbReference>
<dbReference type="InterPro" id="IPR036318">
    <property type="entry name" value="FAD-bd_PCMH-like_sf"/>
</dbReference>
<dbReference type="InterPro" id="IPR016169">
    <property type="entry name" value="FAD-bd_PCMH_sub2"/>
</dbReference>
<dbReference type="InterPro" id="IPR038770">
    <property type="entry name" value="Na+/solute_symporter_sf"/>
</dbReference>
<dbReference type="InterPro" id="IPR023729">
    <property type="entry name" value="NhaP2"/>
</dbReference>
<dbReference type="InterPro" id="IPR006037">
    <property type="entry name" value="RCK_C"/>
</dbReference>
<dbReference type="InterPro" id="IPR036721">
    <property type="entry name" value="RCK_C_sf"/>
</dbReference>
<dbReference type="InterPro" id="IPR005170">
    <property type="entry name" value="Transptr-assoc_dom"/>
</dbReference>
<dbReference type="NCBIfam" id="NF003714">
    <property type="entry name" value="PRK05326.1-1"/>
    <property type="match status" value="1"/>
</dbReference>
<dbReference type="NCBIfam" id="NF003715">
    <property type="entry name" value="PRK05326.1-2"/>
    <property type="match status" value="1"/>
</dbReference>
<dbReference type="NCBIfam" id="NF003716">
    <property type="entry name" value="PRK05326.1-3"/>
    <property type="match status" value="1"/>
</dbReference>
<dbReference type="PANTHER" id="PTHR32507:SF7">
    <property type="entry name" value="K(+)_H(+) ANTIPORTER NHAP2"/>
    <property type="match status" value="1"/>
</dbReference>
<dbReference type="PANTHER" id="PTHR32507">
    <property type="entry name" value="NA(+)/H(+) ANTIPORTER 1"/>
    <property type="match status" value="1"/>
</dbReference>
<dbReference type="Pfam" id="PF03471">
    <property type="entry name" value="CorC_HlyC"/>
    <property type="match status" value="1"/>
</dbReference>
<dbReference type="Pfam" id="PF00999">
    <property type="entry name" value="Na_H_Exchanger"/>
    <property type="match status" value="1"/>
</dbReference>
<dbReference type="Pfam" id="PF02080">
    <property type="entry name" value="TrkA_C"/>
    <property type="match status" value="1"/>
</dbReference>
<dbReference type="SMART" id="SM01091">
    <property type="entry name" value="CorC_HlyC"/>
    <property type="match status" value="1"/>
</dbReference>
<dbReference type="SUPFAM" id="SSF56176">
    <property type="entry name" value="FAD-binding/transporter-associated domain-like"/>
    <property type="match status" value="1"/>
</dbReference>
<dbReference type="SUPFAM" id="SSF116726">
    <property type="entry name" value="TrkA C-terminal domain-like"/>
    <property type="match status" value="1"/>
</dbReference>
<dbReference type="PROSITE" id="PS51202">
    <property type="entry name" value="RCK_C"/>
    <property type="match status" value="1"/>
</dbReference>
<sequence length="580" mass="61392">MDATTINSLFLIGALLVAASILVSSLSSRLGIPILVIILAVGMVAGVDGGGIIFDNYATAYLVGNLALAVILLDGGLRTRVASFRVALWPALSLATVGVLITTVLTGMVAAWLFNLSVIQGLLIGAIVGSTDAAAVFSLLGGKGLNERVTASLEIESGSNDPMAVFLTVTLIGMLASGQTGLHWGLLGHLIQEFGIGSFIGLGGGWILLQLVNRINLAAGLYPILVIAGGLAIFALTNAIHGSGFLAVYLCGLVLGNRPIRSRHGILHMLDGMAWLAQIGMFLVLGLLVTPHDLLPIAIPALGLALWMILVARPLSVMVGLLPFKAFHGREKAFIAWVGLRGAVPIILAVFPLMAGLPNAQLYFNLAFFIVLVSLLLQGTSLPWMAKLLKVTVPPDPAPISRAALEVHVTSEWELFVYRLGAEKWCIGAALRELKMPEGTRIAALFRGQQLLHPSGSTTLEVGDLLCVIGHEHDLPALGKLFSQAPQRGLDLRFFGDFVLEGDARLGEVAALYGLKLDGIDPGMPLSQFIVQKNRGEPVVGDQIEWNGTIWTVAVMDGNKIQKVGVKFPEGTRPGPGLFL</sequence>
<comment type="function">
    <text evidence="1">K(+)/H(+) antiporter that extrudes potassium in exchange for external protons and maintains the internal concentration of potassium under toxic levels.</text>
</comment>
<comment type="catalytic activity">
    <reaction evidence="1">
        <text>K(+)(in) + H(+)(out) = K(+)(out) + H(+)(in)</text>
        <dbReference type="Rhea" id="RHEA:29467"/>
        <dbReference type="ChEBI" id="CHEBI:15378"/>
        <dbReference type="ChEBI" id="CHEBI:29103"/>
    </reaction>
    <physiologicalReaction direction="left-to-right" evidence="1">
        <dbReference type="Rhea" id="RHEA:29468"/>
    </physiologicalReaction>
</comment>
<comment type="subcellular location">
    <subcellularLocation>
        <location evidence="1">Cell inner membrane</location>
        <topology evidence="1">Multi-pass membrane protein</topology>
    </subcellularLocation>
</comment>
<comment type="similarity">
    <text evidence="1">Belongs to the monovalent cation:proton antiporter 1 (CPA1) transporter (TC 2.A.36) family. NhaP2 subfamily.</text>
</comment>
<comment type="sequence caution" evidence="2">
    <conflict type="erroneous initiation">
        <sequence resource="EMBL-CDS" id="AAO58451"/>
    </conflict>
</comment>
<name>NHAP2_PSESM</name>
<protein>
    <recommendedName>
        <fullName evidence="1">K(+)/H(+) antiporter NhaP2</fullName>
    </recommendedName>
    <alternativeName>
        <fullName evidence="1">Potassium/proton antiporter NhaP2</fullName>
    </alternativeName>
</protein>
<gene>
    <name evidence="1" type="primary">nhaP2</name>
    <name type="synonym">cvrA</name>
    <name type="ordered locus">PSPTO_5023</name>
</gene>
<keyword id="KW-0050">Antiport</keyword>
<keyword id="KW-0997">Cell inner membrane</keyword>
<keyword id="KW-1003">Cell membrane</keyword>
<keyword id="KW-0406">Ion transport</keyword>
<keyword id="KW-0472">Membrane</keyword>
<keyword id="KW-0630">Potassium</keyword>
<keyword id="KW-0633">Potassium transport</keyword>
<keyword id="KW-1185">Reference proteome</keyword>
<keyword id="KW-0812">Transmembrane</keyword>
<keyword id="KW-1133">Transmembrane helix</keyword>
<keyword id="KW-0813">Transport</keyword>